<gene>
    <name evidence="1" type="primary">yeaL</name>
    <name type="ordered locus">ECDH10B_1927</name>
</gene>
<organism>
    <name type="scientific">Escherichia coli (strain K12 / DH10B)</name>
    <dbReference type="NCBI Taxonomy" id="316385"/>
    <lineage>
        <taxon>Bacteria</taxon>
        <taxon>Pseudomonadati</taxon>
        <taxon>Pseudomonadota</taxon>
        <taxon>Gammaproteobacteria</taxon>
        <taxon>Enterobacterales</taxon>
        <taxon>Enterobacteriaceae</taxon>
        <taxon>Escherichia</taxon>
    </lineage>
</organism>
<evidence type="ECO:0000255" key="1">
    <source>
        <dbReference type="HAMAP-Rule" id="MF_01874"/>
    </source>
</evidence>
<comment type="subcellular location">
    <subcellularLocation>
        <location evidence="1">Cell membrane</location>
        <topology evidence="1">Multi-pass membrane protein</topology>
    </subcellularLocation>
</comment>
<comment type="similarity">
    <text evidence="1">Belongs to the UPF0756 family.</text>
</comment>
<reference key="1">
    <citation type="journal article" date="2008" name="J. Bacteriol.">
        <title>The complete genome sequence of Escherichia coli DH10B: insights into the biology of a laboratory workhorse.</title>
        <authorList>
            <person name="Durfee T."/>
            <person name="Nelson R."/>
            <person name="Baldwin S."/>
            <person name="Plunkett G. III"/>
            <person name="Burland V."/>
            <person name="Mau B."/>
            <person name="Petrosino J.F."/>
            <person name="Qin X."/>
            <person name="Muzny D.M."/>
            <person name="Ayele M."/>
            <person name="Gibbs R.A."/>
            <person name="Csorgo B."/>
            <person name="Posfai G."/>
            <person name="Weinstock G.M."/>
            <person name="Blattner F.R."/>
        </authorList>
    </citation>
    <scope>NUCLEOTIDE SEQUENCE [LARGE SCALE GENOMIC DNA]</scope>
    <source>
        <strain>K12 / DH10B</strain>
    </source>
</reference>
<protein>
    <recommendedName>
        <fullName evidence="1">UPF0756 membrane protein YeaL</fullName>
    </recommendedName>
</protein>
<accession>B1XGP9</accession>
<sequence length="148" mass="15256">MFDVTLLILLGLAALGFISHNTTVAVSILVLIIVRVTPLSTFFPWIEKQGLSIGIIILTIGVMAPIASGTLPPSTLIHSFLNWKSLVAIAVGVIVSWLGGRGVTLMGSQPQLVAGLLVGTVLGVALFRGVPVGPLIAAGLVSLIVGKQ</sequence>
<feature type="chain" id="PRO_0000388858" description="UPF0756 membrane protein YeaL">
    <location>
        <begin position="1"/>
        <end position="148"/>
    </location>
</feature>
<feature type="transmembrane region" description="Helical" evidence="1">
    <location>
        <begin position="14"/>
        <end position="34"/>
    </location>
</feature>
<feature type="transmembrane region" description="Helical" evidence="1">
    <location>
        <begin position="51"/>
        <end position="71"/>
    </location>
</feature>
<feature type="transmembrane region" description="Helical" evidence="1">
    <location>
        <begin position="86"/>
        <end position="106"/>
    </location>
</feature>
<feature type="transmembrane region" description="Helical" evidence="1">
    <location>
        <begin position="121"/>
        <end position="141"/>
    </location>
</feature>
<proteinExistence type="inferred from homology"/>
<keyword id="KW-1003">Cell membrane</keyword>
<keyword id="KW-0472">Membrane</keyword>
<keyword id="KW-0812">Transmembrane</keyword>
<keyword id="KW-1133">Transmembrane helix</keyword>
<name>YEAL_ECODH</name>
<dbReference type="EMBL" id="CP000948">
    <property type="protein sequence ID" value="ACB02987.1"/>
    <property type="molecule type" value="Genomic_DNA"/>
</dbReference>
<dbReference type="RefSeq" id="WP_000460707.1">
    <property type="nucleotide sequence ID" value="NC_010473.1"/>
</dbReference>
<dbReference type="KEGG" id="ecd:ECDH10B_1927"/>
<dbReference type="HOGENOM" id="CLU_125889_0_0_6"/>
<dbReference type="GO" id="GO:0005886">
    <property type="term" value="C:plasma membrane"/>
    <property type="evidence" value="ECO:0007669"/>
    <property type="project" value="UniProtKB-SubCell"/>
</dbReference>
<dbReference type="HAMAP" id="MF_01874">
    <property type="entry name" value="UPF0756"/>
    <property type="match status" value="1"/>
</dbReference>
<dbReference type="InterPro" id="IPR007382">
    <property type="entry name" value="UPF0756_TM"/>
</dbReference>
<dbReference type="PANTHER" id="PTHR38452">
    <property type="entry name" value="UPF0756 MEMBRANE PROTEIN YEAL"/>
    <property type="match status" value="1"/>
</dbReference>
<dbReference type="PANTHER" id="PTHR38452:SF1">
    <property type="entry name" value="UPF0756 MEMBRANE PROTEIN YEAL"/>
    <property type="match status" value="1"/>
</dbReference>
<dbReference type="Pfam" id="PF04284">
    <property type="entry name" value="DUF441"/>
    <property type="match status" value="1"/>
</dbReference>